<keyword id="KW-0694">RNA-binding</keyword>
<keyword id="KW-0804">Transcription</keyword>
<keyword id="KW-0889">Transcription antitermination</keyword>
<keyword id="KW-0805">Transcription regulation</keyword>
<protein>
    <recommendedName>
        <fullName evidence="1">Transcription antitermination protein NusB</fullName>
    </recommendedName>
    <alternativeName>
        <fullName evidence="1">Antitermination factor NusB</fullName>
    </alternativeName>
</protein>
<sequence length="145" mass="15981">MKKSARRQSRELATQGLYQWLLSNAAPGEIDAQLRGALGYDKADKTLLDTILHGVIREHATLAEAISPSLDRPIDQLSPVERAVLLIATYELTHQIETPYRVIINEAVELAKTFGGSDGYKYVNGVLDKLAVKLRPAETQARRGA</sequence>
<evidence type="ECO:0000255" key="1">
    <source>
        <dbReference type="HAMAP-Rule" id="MF_00073"/>
    </source>
</evidence>
<proteinExistence type="inferred from homology"/>
<reference key="1">
    <citation type="journal article" date="2010" name="Genome Biol. Evol.">
        <title>Continuing evolution of Burkholderia mallei through genome reduction and large-scale rearrangements.</title>
        <authorList>
            <person name="Losada L."/>
            <person name="Ronning C.M."/>
            <person name="DeShazer D."/>
            <person name="Woods D."/>
            <person name="Fedorova N."/>
            <person name="Kim H.S."/>
            <person name="Shabalina S.A."/>
            <person name="Pearson T.R."/>
            <person name="Brinkac L."/>
            <person name="Tan P."/>
            <person name="Nandi T."/>
            <person name="Crabtree J."/>
            <person name="Badger J."/>
            <person name="Beckstrom-Sternberg S."/>
            <person name="Saqib M."/>
            <person name="Schutzer S.E."/>
            <person name="Keim P."/>
            <person name="Nierman W.C."/>
        </authorList>
    </citation>
    <scope>NUCLEOTIDE SEQUENCE [LARGE SCALE GENOMIC DNA]</scope>
    <source>
        <strain>NCTC 10229</strain>
    </source>
</reference>
<dbReference type="EMBL" id="CP000546">
    <property type="protein sequence ID" value="ABN02538.1"/>
    <property type="molecule type" value="Genomic_DNA"/>
</dbReference>
<dbReference type="RefSeq" id="WP_004185707.1">
    <property type="nucleotide sequence ID" value="NC_008836.1"/>
</dbReference>
<dbReference type="SMR" id="A2S9D3"/>
<dbReference type="GeneID" id="93061205"/>
<dbReference type="KEGG" id="bml:BMA10229_A2595"/>
<dbReference type="HOGENOM" id="CLU_087843_4_1_4"/>
<dbReference type="Proteomes" id="UP000002283">
    <property type="component" value="Chromosome I"/>
</dbReference>
<dbReference type="GO" id="GO:0005829">
    <property type="term" value="C:cytosol"/>
    <property type="evidence" value="ECO:0007669"/>
    <property type="project" value="TreeGrafter"/>
</dbReference>
<dbReference type="GO" id="GO:0003723">
    <property type="term" value="F:RNA binding"/>
    <property type="evidence" value="ECO:0007669"/>
    <property type="project" value="UniProtKB-UniRule"/>
</dbReference>
<dbReference type="GO" id="GO:0006353">
    <property type="term" value="P:DNA-templated transcription termination"/>
    <property type="evidence" value="ECO:0007669"/>
    <property type="project" value="UniProtKB-UniRule"/>
</dbReference>
<dbReference type="GO" id="GO:0031564">
    <property type="term" value="P:transcription antitermination"/>
    <property type="evidence" value="ECO:0007669"/>
    <property type="project" value="UniProtKB-KW"/>
</dbReference>
<dbReference type="Gene3D" id="1.10.940.10">
    <property type="entry name" value="NusB-like"/>
    <property type="match status" value="1"/>
</dbReference>
<dbReference type="HAMAP" id="MF_00073">
    <property type="entry name" value="NusB"/>
    <property type="match status" value="1"/>
</dbReference>
<dbReference type="InterPro" id="IPR035926">
    <property type="entry name" value="NusB-like_sf"/>
</dbReference>
<dbReference type="InterPro" id="IPR011605">
    <property type="entry name" value="NusB_fam"/>
</dbReference>
<dbReference type="InterPro" id="IPR006027">
    <property type="entry name" value="NusB_RsmB_TIM44"/>
</dbReference>
<dbReference type="NCBIfam" id="TIGR01951">
    <property type="entry name" value="nusB"/>
    <property type="match status" value="1"/>
</dbReference>
<dbReference type="PANTHER" id="PTHR11078:SF3">
    <property type="entry name" value="ANTITERMINATION NUSB DOMAIN-CONTAINING PROTEIN"/>
    <property type="match status" value="1"/>
</dbReference>
<dbReference type="PANTHER" id="PTHR11078">
    <property type="entry name" value="N UTILIZATION SUBSTANCE PROTEIN B-RELATED"/>
    <property type="match status" value="1"/>
</dbReference>
<dbReference type="Pfam" id="PF01029">
    <property type="entry name" value="NusB"/>
    <property type="match status" value="1"/>
</dbReference>
<dbReference type="SUPFAM" id="SSF48013">
    <property type="entry name" value="NusB-like"/>
    <property type="match status" value="1"/>
</dbReference>
<gene>
    <name evidence="1" type="primary">nusB</name>
    <name type="ordered locus">BMA10229_A2595</name>
</gene>
<comment type="function">
    <text evidence="1">Involved in transcription antitermination. Required for transcription of ribosomal RNA (rRNA) genes. Binds specifically to the boxA antiterminator sequence of the ribosomal RNA (rrn) operons.</text>
</comment>
<comment type="similarity">
    <text evidence="1">Belongs to the NusB family.</text>
</comment>
<accession>A2S9D3</accession>
<organism>
    <name type="scientific">Burkholderia mallei (strain NCTC 10229)</name>
    <dbReference type="NCBI Taxonomy" id="412022"/>
    <lineage>
        <taxon>Bacteria</taxon>
        <taxon>Pseudomonadati</taxon>
        <taxon>Pseudomonadota</taxon>
        <taxon>Betaproteobacteria</taxon>
        <taxon>Burkholderiales</taxon>
        <taxon>Burkholderiaceae</taxon>
        <taxon>Burkholderia</taxon>
        <taxon>pseudomallei group</taxon>
    </lineage>
</organism>
<name>NUSB_BURM9</name>
<feature type="chain" id="PRO_1000023714" description="Transcription antitermination protein NusB">
    <location>
        <begin position="1"/>
        <end position="145"/>
    </location>
</feature>